<proteinExistence type="inferred from homology"/>
<accession>B0REJ5</accession>
<protein>
    <recommendedName>
        <fullName evidence="1">Probable cell division protein WhiA</fullName>
    </recommendedName>
</protein>
<sequence length="326" mass="35429">MPLTSDVKEELSRVEVSKTTVRAAELATILRFSGGLHLISNRIAVESELDTPLLARRVRKDLAELYGVRSDISVIPASGMRRATHYLVRVMEGGETLARQTGLLDARRRPIRGLPNRLTTGSREEIAAVWRGAFLAAGTLTDPGRSAALEVTCPGNEAAMALVGAAGRLDVSAKAREVRGVHRVVIRDGDAIGQMLRAMGAQGTVVNWEEMRQRREVRATANRLVNFDDANLRRSAQAAVAACARVERAMEILGPDIPEHLKYAGDLRLRFRDSSLDELGHHADPPMTKDAVAGRIRRLLAMADKKAVDEGLPGTDANLPADLDDV</sequence>
<name>WHIA_CLASE</name>
<evidence type="ECO:0000255" key="1">
    <source>
        <dbReference type="HAMAP-Rule" id="MF_01420"/>
    </source>
</evidence>
<comment type="function">
    <text evidence="1">Involved in cell division and chromosome segregation.</text>
</comment>
<comment type="similarity">
    <text evidence="1">Belongs to the WhiA family.</text>
</comment>
<keyword id="KW-0131">Cell cycle</keyword>
<keyword id="KW-0132">Cell division</keyword>
<keyword id="KW-0238">DNA-binding</keyword>
<dbReference type="EMBL" id="AM849034">
    <property type="protein sequence ID" value="CAQ02087.1"/>
    <property type="molecule type" value="Genomic_DNA"/>
</dbReference>
<dbReference type="RefSeq" id="WP_012299318.1">
    <property type="nucleotide sequence ID" value="NZ_MZMN01000003.1"/>
</dbReference>
<dbReference type="SMR" id="B0REJ5"/>
<dbReference type="STRING" id="31964.CMS1990"/>
<dbReference type="KEGG" id="cms:CMS1990"/>
<dbReference type="eggNOG" id="COG1481">
    <property type="taxonomic scope" value="Bacteria"/>
</dbReference>
<dbReference type="HOGENOM" id="CLU_053282_0_0_11"/>
<dbReference type="OrthoDB" id="5197218at2"/>
<dbReference type="Proteomes" id="UP000001318">
    <property type="component" value="Chromosome"/>
</dbReference>
<dbReference type="GO" id="GO:0003677">
    <property type="term" value="F:DNA binding"/>
    <property type="evidence" value="ECO:0007669"/>
    <property type="project" value="UniProtKB-UniRule"/>
</dbReference>
<dbReference type="GO" id="GO:0051301">
    <property type="term" value="P:cell division"/>
    <property type="evidence" value="ECO:0007669"/>
    <property type="project" value="UniProtKB-UniRule"/>
</dbReference>
<dbReference type="GO" id="GO:0043937">
    <property type="term" value="P:regulation of sporulation"/>
    <property type="evidence" value="ECO:0007669"/>
    <property type="project" value="InterPro"/>
</dbReference>
<dbReference type="FunFam" id="3.10.28.10:FF:000001">
    <property type="entry name" value="Probable cell division protein WhiA"/>
    <property type="match status" value="1"/>
</dbReference>
<dbReference type="Gene3D" id="3.10.28.10">
    <property type="entry name" value="Homing endonucleases"/>
    <property type="match status" value="1"/>
</dbReference>
<dbReference type="HAMAP" id="MF_01420">
    <property type="entry name" value="HTH_type_WhiA"/>
    <property type="match status" value="1"/>
</dbReference>
<dbReference type="InterPro" id="IPR027434">
    <property type="entry name" value="Homing_endonucl"/>
</dbReference>
<dbReference type="InterPro" id="IPR018478">
    <property type="entry name" value="Sporu_reg_WhiA_N_dom"/>
</dbReference>
<dbReference type="InterPro" id="IPR003802">
    <property type="entry name" value="Sporulation_regulator_WhiA"/>
</dbReference>
<dbReference type="InterPro" id="IPR023054">
    <property type="entry name" value="Sporulation_regulator_WhiA_C"/>
</dbReference>
<dbReference type="InterPro" id="IPR039518">
    <property type="entry name" value="WhiA_LAGLIDADG_dom"/>
</dbReference>
<dbReference type="NCBIfam" id="TIGR00647">
    <property type="entry name" value="DNA_bind_WhiA"/>
    <property type="match status" value="1"/>
</dbReference>
<dbReference type="PANTHER" id="PTHR37307">
    <property type="entry name" value="CELL DIVISION PROTEIN WHIA-RELATED"/>
    <property type="match status" value="1"/>
</dbReference>
<dbReference type="PANTHER" id="PTHR37307:SF1">
    <property type="entry name" value="CELL DIVISION PROTEIN WHIA-RELATED"/>
    <property type="match status" value="1"/>
</dbReference>
<dbReference type="Pfam" id="PF02650">
    <property type="entry name" value="HTH_WhiA"/>
    <property type="match status" value="1"/>
</dbReference>
<dbReference type="Pfam" id="PF14527">
    <property type="entry name" value="LAGLIDADG_WhiA"/>
    <property type="match status" value="1"/>
</dbReference>
<dbReference type="Pfam" id="PF10298">
    <property type="entry name" value="WhiA_N"/>
    <property type="match status" value="1"/>
</dbReference>
<reference key="1">
    <citation type="journal article" date="2008" name="J. Bacteriol.">
        <title>Genome of the actinomycete plant pathogen Clavibacter michiganensis subsp. sepedonicus suggests recent niche adaptation.</title>
        <authorList>
            <person name="Bentley S.D."/>
            <person name="Corton C."/>
            <person name="Brown S.E."/>
            <person name="Barron A."/>
            <person name="Clark L."/>
            <person name="Doggett J."/>
            <person name="Harris B."/>
            <person name="Ormond D."/>
            <person name="Quail M.A."/>
            <person name="May G."/>
            <person name="Francis D."/>
            <person name="Knudson D."/>
            <person name="Parkhill J."/>
            <person name="Ishimaru C.A."/>
        </authorList>
    </citation>
    <scope>NUCLEOTIDE SEQUENCE [LARGE SCALE GENOMIC DNA]</scope>
    <source>
        <strain>ATCC 33113 / DSM 20744 / JCM 9667 / LMG 2889 / ICMP 2535 / C-1</strain>
    </source>
</reference>
<gene>
    <name evidence="1" type="primary">whiA</name>
    <name type="ordered locus">CMS1990</name>
</gene>
<organism>
    <name type="scientific">Clavibacter sepedonicus</name>
    <name type="common">Clavibacter michiganensis subsp. sepedonicus</name>
    <dbReference type="NCBI Taxonomy" id="31964"/>
    <lineage>
        <taxon>Bacteria</taxon>
        <taxon>Bacillati</taxon>
        <taxon>Actinomycetota</taxon>
        <taxon>Actinomycetes</taxon>
        <taxon>Micrococcales</taxon>
        <taxon>Microbacteriaceae</taxon>
        <taxon>Clavibacter</taxon>
    </lineage>
</organism>
<feature type="chain" id="PRO_0000376454" description="Probable cell division protein WhiA">
    <location>
        <begin position="1"/>
        <end position="326"/>
    </location>
</feature>
<feature type="DNA-binding region" description="H-T-H motif" evidence="1">
    <location>
        <begin position="275"/>
        <end position="308"/>
    </location>
</feature>